<name>RECR_CHLTR</name>
<proteinExistence type="inferred from homology"/>
<protein>
    <recommendedName>
        <fullName evidence="1">Recombination protein RecR</fullName>
    </recommendedName>
</protein>
<gene>
    <name evidence="1" type="primary">recR</name>
    <name type="ordered locus">CT_240</name>
</gene>
<comment type="function">
    <text evidence="1">May play a role in DNA repair. It seems to be involved in an RecBC-independent recombinational process of DNA repair. It may act with RecF and RecO.</text>
</comment>
<comment type="similarity">
    <text evidence="1">Belongs to the RecR family.</text>
</comment>
<keyword id="KW-0227">DNA damage</keyword>
<keyword id="KW-0233">DNA recombination</keyword>
<keyword id="KW-0234">DNA repair</keyword>
<keyword id="KW-0479">Metal-binding</keyword>
<keyword id="KW-1185">Reference proteome</keyword>
<keyword id="KW-0862">Zinc</keyword>
<keyword id="KW-0863">Zinc-finger</keyword>
<evidence type="ECO:0000255" key="1">
    <source>
        <dbReference type="HAMAP-Rule" id="MF_00017"/>
    </source>
</evidence>
<accession>O84243</accession>
<organism>
    <name type="scientific">Chlamydia trachomatis serovar D (strain ATCC VR-885 / DSM 19411 / UW-3/Cx)</name>
    <dbReference type="NCBI Taxonomy" id="272561"/>
    <lineage>
        <taxon>Bacteria</taxon>
        <taxon>Pseudomonadati</taxon>
        <taxon>Chlamydiota</taxon>
        <taxon>Chlamydiia</taxon>
        <taxon>Chlamydiales</taxon>
        <taxon>Chlamydiaceae</taxon>
        <taxon>Chlamydia/Chlamydophila group</taxon>
        <taxon>Chlamydia</taxon>
    </lineage>
</organism>
<dbReference type="EMBL" id="AE001273">
    <property type="protein sequence ID" value="AAC67833.1"/>
    <property type="molecule type" value="Genomic_DNA"/>
</dbReference>
<dbReference type="PIR" id="A71539">
    <property type="entry name" value="A71539"/>
</dbReference>
<dbReference type="RefSeq" id="NP_219745.1">
    <property type="nucleotide sequence ID" value="NC_000117.1"/>
</dbReference>
<dbReference type="RefSeq" id="WP_009871587.1">
    <property type="nucleotide sequence ID" value="NC_000117.1"/>
</dbReference>
<dbReference type="SMR" id="O84243"/>
<dbReference type="FunCoup" id="O84243">
    <property type="interactions" value="143"/>
</dbReference>
<dbReference type="STRING" id="272561.CT_240"/>
<dbReference type="EnsemblBacteria" id="AAC67833">
    <property type="protein sequence ID" value="AAC67833"/>
    <property type="gene ID" value="CT_240"/>
</dbReference>
<dbReference type="GeneID" id="884885"/>
<dbReference type="KEGG" id="ctr:CT_240"/>
<dbReference type="PATRIC" id="fig|272561.5.peg.257"/>
<dbReference type="HOGENOM" id="CLU_060739_1_1_0"/>
<dbReference type="InParanoid" id="O84243"/>
<dbReference type="OrthoDB" id="9802672at2"/>
<dbReference type="Proteomes" id="UP000000431">
    <property type="component" value="Chromosome"/>
</dbReference>
<dbReference type="GO" id="GO:0003677">
    <property type="term" value="F:DNA binding"/>
    <property type="evidence" value="ECO:0007669"/>
    <property type="project" value="UniProtKB-UniRule"/>
</dbReference>
<dbReference type="GO" id="GO:0008270">
    <property type="term" value="F:zinc ion binding"/>
    <property type="evidence" value="ECO:0007669"/>
    <property type="project" value="UniProtKB-KW"/>
</dbReference>
<dbReference type="GO" id="GO:0006302">
    <property type="term" value="P:double-strand break repair"/>
    <property type="evidence" value="ECO:0000318"/>
    <property type="project" value="GO_Central"/>
</dbReference>
<dbReference type="GO" id="GO:0000725">
    <property type="term" value="P:recombinational repair"/>
    <property type="evidence" value="ECO:0000318"/>
    <property type="project" value="GO_Central"/>
</dbReference>
<dbReference type="CDD" id="cd01025">
    <property type="entry name" value="TOPRIM_recR"/>
    <property type="match status" value="1"/>
</dbReference>
<dbReference type="Gene3D" id="3.40.1360.10">
    <property type="match status" value="1"/>
</dbReference>
<dbReference type="Gene3D" id="1.10.8.420">
    <property type="entry name" value="RecR Domain 1"/>
    <property type="match status" value="1"/>
</dbReference>
<dbReference type="HAMAP" id="MF_00017">
    <property type="entry name" value="RecR"/>
    <property type="match status" value="1"/>
</dbReference>
<dbReference type="InterPro" id="IPR000093">
    <property type="entry name" value="DNA_Rcmb_RecR"/>
</dbReference>
<dbReference type="InterPro" id="IPR023627">
    <property type="entry name" value="Rcmb_RecR"/>
</dbReference>
<dbReference type="InterPro" id="IPR015967">
    <property type="entry name" value="Rcmb_RecR_Znf"/>
</dbReference>
<dbReference type="InterPro" id="IPR006171">
    <property type="entry name" value="TOPRIM_dom"/>
</dbReference>
<dbReference type="InterPro" id="IPR034137">
    <property type="entry name" value="TOPRIM_RecR"/>
</dbReference>
<dbReference type="NCBIfam" id="TIGR00615">
    <property type="entry name" value="recR"/>
    <property type="match status" value="1"/>
</dbReference>
<dbReference type="PANTHER" id="PTHR30446">
    <property type="entry name" value="RECOMBINATION PROTEIN RECR"/>
    <property type="match status" value="1"/>
</dbReference>
<dbReference type="PANTHER" id="PTHR30446:SF0">
    <property type="entry name" value="RECOMBINATION PROTEIN RECR"/>
    <property type="match status" value="1"/>
</dbReference>
<dbReference type="Pfam" id="PF21175">
    <property type="entry name" value="RecR_C"/>
    <property type="match status" value="1"/>
</dbReference>
<dbReference type="Pfam" id="PF21176">
    <property type="entry name" value="RecR_HhH"/>
    <property type="match status" value="1"/>
</dbReference>
<dbReference type="Pfam" id="PF13662">
    <property type="entry name" value="Toprim_4"/>
    <property type="match status" value="1"/>
</dbReference>
<dbReference type="SMART" id="SM00493">
    <property type="entry name" value="TOPRIM"/>
    <property type="match status" value="1"/>
</dbReference>
<dbReference type="SUPFAM" id="SSF111304">
    <property type="entry name" value="Recombination protein RecR"/>
    <property type="match status" value="1"/>
</dbReference>
<dbReference type="PROSITE" id="PS01300">
    <property type="entry name" value="RECR"/>
    <property type="match status" value="1"/>
</dbReference>
<dbReference type="PROSITE" id="PS50880">
    <property type="entry name" value="TOPRIM"/>
    <property type="match status" value="1"/>
</dbReference>
<feature type="chain" id="PRO_0000190306" description="Recombination protein RecR">
    <location>
        <begin position="1"/>
        <end position="200"/>
    </location>
</feature>
<feature type="domain" description="Toprim" evidence="1">
    <location>
        <begin position="82"/>
        <end position="177"/>
    </location>
</feature>
<feature type="zinc finger region" description="C4-type" evidence="1">
    <location>
        <begin position="58"/>
        <end position="75"/>
    </location>
</feature>
<reference key="1">
    <citation type="journal article" date="1998" name="Science">
        <title>Genome sequence of an obligate intracellular pathogen of humans: Chlamydia trachomatis.</title>
        <authorList>
            <person name="Stephens R.S."/>
            <person name="Kalman S."/>
            <person name="Lammel C.J."/>
            <person name="Fan J."/>
            <person name="Marathe R."/>
            <person name="Aravind L."/>
            <person name="Mitchell W.P."/>
            <person name="Olinger L."/>
            <person name="Tatusov R.L."/>
            <person name="Zhao Q."/>
            <person name="Koonin E.V."/>
            <person name="Davis R.W."/>
        </authorList>
    </citation>
    <scope>NUCLEOTIDE SEQUENCE [LARGE SCALE GENOMIC DNA]</scope>
    <source>
        <strain>ATCC VR-885 / DSM 19411 / UW-3/Cx</strain>
    </source>
</reference>
<sequence length="200" mass="22122">MLKYPDYISKLISFLKKLPGIGFKSAEKIAFELLEWDPSQIEAMAQALQEFSTSHATCSNCFCLKISQTSPCNFCSESRDSSSLCIVATPKDVFALEKSKIFKGHYFVLGNLLSPITGKHLSLEKLAILKQRIEACSPKEMIIALDATLEGDATALFLKQEFSYLPIKISRLALGMPVGLSFDFVDANTLARAFSGRNCF</sequence>